<keyword id="KW-0217">Developmental protein</keyword>
<keyword id="KW-0221">Differentiation</keyword>
<keyword id="KW-0238">DNA-binding</keyword>
<keyword id="KW-0371">Homeobox</keyword>
<keyword id="KW-0524">Neurogenesis</keyword>
<keyword id="KW-0539">Nucleus</keyword>
<keyword id="KW-1267">Proteomics identification</keyword>
<keyword id="KW-1185">Reference proteome</keyword>
<keyword id="KW-0804">Transcription</keyword>
<keyword id="KW-0805">Transcription regulation</keyword>
<comment type="function">
    <text>Probably involved in the differentiation of hypothalamic neuroendocrine cells.</text>
</comment>
<comment type="interaction">
    <interactant intactId="EBI-12865884">
        <id>Q5XKR4</id>
    </interactant>
    <interactant intactId="EBI-7162175">
        <id>Q9HBH7</id>
        <label>BEX1</label>
    </interactant>
    <organismsDiffer>false</organismsDiffer>
    <experiments>3</experiments>
</comment>
<comment type="interaction">
    <interactant intactId="EBI-12865884">
        <id>Q5XKR4</id>
    </interactant>
    <interactant intactId="EBI-953695">
        <id>O00585</id>
        <label>CCL21</label>
    </interactant>
    <organismsDiffer>false</organismsDiffer>
    <experiments>3</experiments>
</comment>
<comment type="interaction">
    <interactant intactId="EBI-12865884">
        <id>Q5XKR4</id>
    </interactant>
    <interactant intactId="EBI-295663">
        <id>Q00534</id>
        <label>CDK6</label>
    </interactant>
    <organismsDiffer>false</organismsDiffer>
    <experiments>3</experiments>
</comment>
<comment type="interaction">
    <interactant intactId="EBI-12865884">
        <id>Q5XKR4</id>
    </interactant>
    <interactant intactId="EBI-12012272">
        <id>Q9UBL6-2</id>
        <label>CPNE7</label>
    </interactant>
    <organismsDiffer>false</organismsDiffer>
    <experiments>3</experiments>
</comment>
<comment type="interaction">
    <interactant intactId="EBI-12865884">
        <id>Q5XKR4</id>
    </interactant>
    <interactant intactId="EBI-19949518">
        <id>O95936-4</id>
        <label>EOMES</label>
    </interactant>
    <organismsDiffer>false</organismsDiffer>
    <experiments>3</experiments>
</comment>
<comment type="interaction">
    <interactant intactId="EBI-12865884">
        <id>Q5XKR4</id>
    </interactant>
    <interactant intactId="EBI-712685">
        <id>O43924</id>
        <label>PDE6D</label>
    </interactant>
    <organismsDiffer>false</organismsDiffer>
    <experiments>3</experiments>
</comment>
<comment type="interaction">
    <interactant intactId="EBI-12865884">
        <id>Q5XKR4</id>
    </interactant>
    <interactant intactId="EBI-12854384">
        <id>Q9Y666-2</id>
        <label>SLC12A7</label>
    </interactant>
    <organismsDiffer>false</organismsDiffer>
    <experiments>3</experiments>
</comment>
<comment type="interaction">
    <interactant intactId="EBI-12865884">
        <id>Q5XKR4</id>
    </interactant>
    <interactant intactId="EBI-748091">
        <id>Q68CL5</id>
        <label>TPGS2</label>
    </interactant>
    <organismsDiffer>false</organismsDiffer>
    <experiments>3</experiments>
</comment>
<comment type="subcellular location">
    <subcellularLocation>
        <location evidence="1 2 4">Nucleus</location>
    </subcellularLocation>
</comment>
<comment type="developmental stage">
    <text evidence="4">Present in fetal hypothalamus at 19 weeks of gestation (at protein level).</text>
</comment>
<comment type="similarity">
    <text evidence="5">Belongs to the paired homeobox family. Bicoid subfamily.</text>
</comment>
<reference key="1">
    <citation type="journal article" date="2004" name="Genome Res.">
        <title>The status, quality, and expansion of the NIH full-length cDNA project: the Mammalian Gene Collection (MGC).</title>
        <authorList>
            <consortium name="The MGC Project Team"/>
        </authorList>
    </citation>
    <scope>NUCLEOTIDE SEQUENCE [LARGE SCALE MRNA]</scope>
    <source>
        <tissue>Eye</tissue>
    </source>
</reference>
<reference key="2">
    <citation type="journal article" date="1999" name="Genomics">
        <title>Identification, chromosomal assignment, and expression analysis of the human homeodomain-containing gene Orthopedia (OTP).</title>
        <authorList>
            <person name="Lin X."/>
            <person name="State M.W."/>
            <person name="Vaccarino F.M."/>
            <person name="Greally J."/>
            <person name="Hass M."/>
            <person name="Leckman J.F."/>
        </authorList>
    </citation>
    <scope>IDENTIFICATION</scope>
    <scope>DEVELOPMENTAL STAGE</scope>
    <scope>SUBCELLULAR LOCATION</scope>
</reference>
<feature type="chain" id="PRO_0000292432" description="Homeobox protein orthopedia">
    <location>
        <begin position="1"/>
        <end position="325"/>
    </location>
</feature>
<feature type="DNA-binding region" description="Homeobox" evidence="1">
    <location>
        <begin position="104"/>
        <end position="163"/>
    </location>
</feature>
<feature type="region of interest" description="Disordered" evidence="3">
    <location>
        <begin position="32"/>
        <end position="112"/>
    </location>
</feature>
<feature type="short sequence motif" description="OAR" evidence="2">
    <location>
        <begin position="306"/>
        <end position="319"/>
    </location>
</feature>
<feature type="compositionally biased region" description="Gly residues" evidence="3">
    <location>
        <begin position="32"/>
        <end position="42"/>
    </location>
</feature>
<feature type="compositionally biased region" description="Low complexity" evidence="3">
    <location>
        <begin position="90"/>
        <end position="102"/>
    </location>
</feature>
<evidence type="ECO:0000255" key="1">
    <source>
        <dbReference type="PROSITE-ProRule" id="PRU00108"/>
    </source>
</evidence>
<evidence type="ECO:0000255" key="2">
    <source>
        <dbReference type="PROSITE-ProRule" id="PRU00138"/>
    </source>
</evidence>
<evidence type="ECO:0000256" key="3">
    <source>
        <dbReference type="SAM" id="MobiDB-lite"/>
    </source>
</evidence>
<evidence type="ECO:0000269" key="4">
    <source>
    </source>
</evidence>
<evidence type="ECO:0000305" key="5"/>
<protein>
    <recommendedName>
        <fullName>Homeobox protein orthopedia</fullName>
    </recommendedName>
</protein>
<name>OTP_HUMAN</name>
<gene>
    <name type="primary">OTP</name>
</gene>
<dbReference type="EMBL" id="BC001800">
    <property type="protein sequence ID" value="AAH01800.1"/>
    <property type="molecule type" value="mRNA"/>
</dbReference>
<dbReference type="CCDS" id="CCDS4039.1"/>
<dbReference type="RefSeq" id="NP_115485.1">
    <property type="nucleotide sequence ID" value="NM_032109.3"/>
</dbReference>
<dbReference type="SMR" id="Q5XKR4"/>
<dbReference type="BioGRID" id="117008">
    <property type="interactions" value="19"/>
</dbReference>
<dbReference type="FunCoup" id="Q5XKR4">
    <property type="interactions" value="584"/>
</dbReference>
<dbReference type="IntAct" id="Q5XKR4">
    <property type="interactions" value="9"/>
</dbReference>
<dbReference type="STRING" id="9606.ENSP00000302814"/>
<dbReference type="GlyGen" id="Q5XKR4">
    <property type="glycosylation" value="2 sites"/>
</dbReference>
<dbReference type="iPTMnet" id="Q5XKR4"/>
<dbReference type="PhosphoSitePlus" id="Q5XKR4"/>
<dbReference type="BioMuta" id="OTP"/>
<dbReference type="DMDM" id="74762283"/>
<dbReference type="jPOST" id="Q5XKR4"/>
<dbReference type="MassIVE" id="Q5XKR4"/>
<dbReference type="PaxDb" id="9606-ENSP00000302814"/>
<dbReference type="PeptideAtlas" id="Q5XKR4"/>
<dbReference type="ProteomicsDB" id="65833"/>
<dbReference type="Antibodypedia" id="12584">
    <property type="antibodies" value="142 antibodies from 23 providers"/>
</dbReference>
<dbReference type="DNASU" id="23440"/>
<dbReference type="Ensembl" id="ENST00000306422.5">
    <property type="protein sequence ID" value="ENSP00000302814.3"/>
    <property type="gene ID" value="ENSG00000171540.8"/>
</dbReference>
<dbReference type="GeneID" id="23440"/>
<dbReference type="KEGG" id="hsa:23440"/>
<dbReference type="MANE-Select" id="ENST00000306422.5">
    <property type="protein sequence ID" value="ENSP00000302814.3"/>
    <property type="RefSeq nucleotide sequence ID" value="NM_032109.3"/>
    <property type="RefSeq protein sequence ID" value="NP_115485.1"/>
</dbReference>
<dbReference type="UCSC" id="uc003kfg.4">
    <property type="organism name" value="human"/>
</dbReference>
<dbReference type="AGR" id="HGNC:8518"/>
<dbReference type="CTD" id="23440"/>
<dbReference type="DisGeNET" id="23440"/>
<dbReference type="GeneCards" id="OTP"/>
<dbReference type="HGNC" id="HGNC:8518">
    <property type="gene designation" value="OTP"/>
</dbReference>
<dbReference type="HPA" id="ENSG00000171540">
    <property type="expression patterns" value="Tissue enriched (brain)"/>
</dbReference>
<dbReference type="MIM" id="604529">
    <property type="type" value="gene"/>
</dbReference>
<dbReference type="neXtProt" id="NX_Q5XKR4"/>
<dbReference type="OpenTargets" id="ENSG00000171540"/>
<dbReference type="PharmGKB" id="PA32844"/>
<dbReference type="VEuPathDB" id="HostDB:ENSG00000171540"/>
<dbReference type="eggNOG" id="KOG0490">
    <property type="taxonomic scope" value="Eukaryota"/>
</dbReference>
<dbReference type="GeneTree" id="ENSGT00940000159952"/>
<dbReference type="HOGENOM" id="CLU_056068_0_0_1"/>
<dbReference type="InParanoid" id="Q5XKR4"/>
<dbReference type="OMA" id="MLPGEDI"/>
<dbReference type="OrthoDB" id="6159439at2759"/>
<dbReference type="PAN-GO" id="Q5XKR4">
    <property type="GO annotations" value="2 GO annotations based on evolutionary models"/>
</dbReference>
<dbReference type="PhylomeDB" id="Q5XKR4"/>
<dbReference type="TreeFam" id="TF351614"/>
<dbReference type="PathwayCommons" id="Q5XKR4"/>
<dbReference type="SignaLink" id="Q5XKR4"/>
<dbReference type="BioGRID-ORCS" id="23440">
    <property type="hits" value="19 hits in 1168 CRISPR screens"/>
</dbReference>
<dbReference type="ChiTaRS" id="OTP">
    <property type="organism name" value="human"/>
</dbReference>
<dbReference type="GenomeRNAi" id="23440"/>
<dbReference type="Pharos" id="Q5XKR4">
    <property type="development level" value="Tbio"/>
</dbReference>
<dbReference type="PRO" id="PR:Q5XKR4"/>
<dbReference type="Proteomes" id="UP000005640">
    <property type="component" value="Chromosome 5"/>
</dbReference>
<dbReference type="RNAct" id="Q5XKR4">
    <property type="molecule type" value="protein"/>
</dbReference>
<dbReference type="Bgee" id="ENSG00000171540">
    <property type="expression patterns" value="Expressed in pancreatic ductal cell and 19 other cell types or tissues"/>
</dbReference>
<dbReference type="GO" id="GO:0000785">
    <property type="term" value="C:chromatin"/>
    <property type="evidence" value="ECO:0000247"/>
    <property type="project" value="NTNU_SB"/>
</dbReference>
<dbReference type="GO" id="GO:0001650">
    <property type="term" value="C:fibrillar center"/>
    <property type="evidence" value="ECO:0000314"/>
    <property type="project" value="HPA"/>
</dbReference>
<dbReference type="GO" id="GO:0016604">
    <property type="term" value="C:nuclear body"/>
    <property type="evidence" value="ECO:0000314"/>
    <property type="project" value="HPA"/>
</dbReference>
<dbReference type="GO" id="GO:0005654">
    <property type="term" value="C:nucleoplasm"/>
    <property type="evidence" value="ECO:0000314"/>
    <property type="project" value="HPA"/>
</dbReference>
<dbReference type="GO" id="GO:0003677">
    <property type="term" value="F:DNA binding"/>
    <property type="evidence" value="ECO:0000318"/>
    <property type="project" value="GO_Central"/>
</dbReference>
<dbReference type="GO" id="GO:0000981">
    <property type="term" value="F:DNA-binding transcription factor activity, RNA polymerase II-specific"/>
    <property type="evidence" value="ECO:0000247"/>
    <property type="project" value="NTNU_SB"/>
</dbReference>
<dbReference type="GO" id="GO:0001227">
    <property type="term" value="F:DNA-binding transcription repressor activity, RNA polymerase II-specific"/>
    <property type="evidence" value="ECO:0000314"/>
    <property type="project" value="NTNU_SB"/>
</dbReference>
<dbReference type="GO" id="GO:0000977">
    <property type="term" value="F:RNA polymerase II transcription regulatory region sequence-specific DNA binding"/>
    <property type="evidence" value="ECO:0000314"/>
    <property type="project" value="NTNU_SB"/>
</dbReference>
<dbReference type="GO" id="GO:0071542">
    <property type="term" value="P:dopaminergic neuron differentiation"/>
    <property type="evidence" value="ECO:0007669"/>
    <property type="project" value="Ensembl"/>
</dbReference>
<dbReference type="GO" id="GO:0021879">
    <property type="term" value="P:forebrain neuron differentiation"/>
    <property type="evidence" value="ECO:0007669"/>
    <property type="project" value="Ensembl"/>
</dbReference>
<dbReference type="GO" id="GO:0021979">
    <property type="term" value="P:hypothalamus cell differentiation"/>
    <property type="evidence" value="ECO:0007669"/>
    <property type="project" value="Ensembl"/>
</dbReference>
<dbReference type="GO" id="GO:0000122">
    <property type="term" value="P:negative regulation of transcription by RNA polymerase II"/>
    <property type="evidence" value="ECO:0000314"/>
    <property type="project" value="NTNU_SB"/>
</dbReference>
<dbReference type="GO" id="GO:0007405">
    <property type="term" value="P:neuroblast proliferation"/>
    <property type="evidence" value="ECO:0007669"/>
    <property type="project" value="Ensembl"/>
</dbReference>
<dbReference type="GO" id="GO:0061101">
    <property type="term" value="P:neuroendocrine cell differentiation"/>
    <property type="evidence" value="ECO:0007669"/>
    <property type="project" value="Ensembl"/>
</dbReference>
<dbReference type="GO" id="GO:0021985">
    <property type="term" value="P:neurohypophysis development"/>
    <property type="evidence" value="ECO:0007669"/>
    <property type="project" value="Ensembl"/>
</dbReference>
<dbReference type="GO" id="GO:0030182">
    <property type="term" value="P:neuron differentiation"/>
    <property type="evidence" value="ECO:0000318"/>
    <property type="project" value="GO_Central"/>
</dbReference>
<dbReference type="GO" id="GO:0002052">
    <property type="term" value="P:positive regulation of neuroblast proliferation"/>
    <property type="evidence" value="ECO:0007669"/>
    <property type="project" value="Ensembl"/>
</dbReference>
<dbReference type="CDD" id="cd00086">
    <property type="entry name" value="homeodomain"/>
    <property type="match status" value="1"/>
</dbReference>
<dbReference type="FunFam" id="1.10.10.60:FF:000124">
    <property type="entry name" value="Orthopedia homeobox b"/>
    <property type="match status" value="1"/>
</dbReference>
<dbReference type="Gene3D" id="1.10.10.60">
    <property type="entry name" value="Homeodomain-like"/>
    <property type="match status" value="1"/>
</dbReference>
<dbReference type="InterPro" id="IPR001356">
    <property type="entry name" value="HD"/>
</dbReference>
<dbReference type="InterPro" id="IPR017970">
    <property type="entry name" value="Homeobox_CS"/>
</dbReference>
<dbReference type="InterPro" id="IPR009057">
    <property type="entry name" value="Homeodomain-like_sf"/>
</dbReference>
<dbReference type="InterPro" id="IPR000047">
    <property type="entry name" value="HTH_motif"/>
</dbReference>
<dbReference type="InterPro" id="IPR003654">
    <property type="entry name" value="OAR_dom"/>
</dbReference>
<dbReference type="InterPro" id="IPR051895">
    <property type="entry name" value="OTP_Homeobox"/>
</dbReference>
<dbReference type="PANTHER" id="PTHR46770">
    <property type="entry name" value="HOMEOBOX PROTEIN ORTHOPEDIA"/>
    <property type="match status" value="1"/>
</dbReference>
<dbReference type="PANTHER" id="PTHR46770:SF1">
    <property type="entry name" value="HOMEOBOX PROTEIN ORTHOPEDIA"/>
    <property type="match status" value="1"/>
</dbReference>
<dbReference type="Pfam" id="PF00046">
    <property type="entry name" value="Homeodomain"/>
    <property type="match status" value="1"/>
</dbReference>
<dbReference type="Pfam" id="PF03826">
    <property type="entry name" value="OAR"/>
    <property type="match status" value="1"/>
</dbReference>
<dbReference type="PRINTS" id="PR00031">
    <property type="entry name" value="HTHREPRESSR"/>
</dbReference>
<dbReference type="SMART" id="SM00389">
    <property type="entry name" value="HOX"/>
    <property type="match status" value="1"/>
</dbReference>
<dbReference type="SUPFAM" id="SSF46689">
    <property type="entry name" value="Homeodomain-like"/>
    <property type="match status" value="1"/>
</dbReference>
<dbReference type="PROSITE" id="PS00027">
    <property type="entry name" value="HOMEOBOX_1"/>
    <property type="match status" value="1"/>
</dbReference>
<dbReference type="PROSITE" id="PS50071">
    <property type="entry name" value="HOMEOBOX_2"/>
    <property type="match status" value="1"/>
</dbReference>
<dbReference type="PROSITE" id="PS50803">
    <property type="entry name" value="OAR"/>
    <property type="match status" value="1"/>
</dbReference>
<accession>Q5XKR4</accession>
<sequence>MLSHADLLDARLGMKDAAELLGHREAVKCRLGVGGSDPGGHPGDLAPNSDPVEGATLLPGEDITTVGSTPASLAVSAKDPDKQPGPQGGPNPSQAGQQQGQQKQKRHRTRFTPAQLNELERSFAKTHYPDIFMREELALRIGLTESRVQVWFQNRRAKWKKRKKTTNVFRAPGTLLPTPGLPQFPSAAAAAAAAMGDSLCSFHANDTRWAAAAMPGVSQLPLPPALGRQQAMAQSLSQCSLAAGPPPNSMGLSNSLAGSNGAGLQSHLYQPAFPGMVPASLPGPSNVSGSPQLCSSPDSSDVWRGTSIASLRRKALEHTVSMSFT</sequence>
<proteinExistence type="evidence at protein level"/>
<organism>
    <name type="scientific">Homo sapiens</name>
    <name type="common">Human</name>
    <dbReference type="NCBI Taxonomy" id="9606"/>
    <lineage>
        <taxon>Eukaryota</taxon>
        <taxon>Metazoa</taxon>
        <taxon>Chordata</taxon>
        <taxon>Craniata</taxon>
        <taxon>Vertebrata</taxon>
        <taxon>Euteleostomi</taxon>
        <taxon>Mammalia</taxon>
        <taxon>Eutheria</taxon>
        <taxon>Euarchontoglires</taxon>
        <taxon>Primates</taxon>
        <taxon>Haplorrhini</taxon>
        <taxon>Catarrhini</taxon>
        <taxon>Hominidae</taxon>
        <taxon>Homo</taxon>
    </lineage>
</organism>